<gene>
    <name evidence="1" type="primary">atpF</name>
    <name type="ordered locus">Bcen_2953</name>
</gene>
<feature type="chain" id="PRO_0000368380" description="ATP synthase subunit b">
    <location>
        <begin position="1"/>
        <end position="156"/>
    </location>
</feature>
<feature type="transmembrane region" description="Helical" evidence="1">
    <location>
        <begin position="7"/>
        <end position="29"/>
    </location>
</feature>
<name>ATPF_BURO1</name>
<reference key="1">
    <citation type="submission" date="2006-05" db="EMBL/GenBank/DDBJ databases">
        <title>Complete sequence of chromosome 1 of Burkholderia cenocepacia AU 1054.</title>
        <authorList>
            <consortium name="US DOE Joint Genome Institute"/>
            <person name="Copeland A."/>
            <person name="Lucas S."/>
            <person name="Lapidus A."/>
            <person name="Barry K."/>
            <person name="Detter J.C."/>
            <person name="Glavina del Rio T."/>
            <person name="Hammon N."/>
            <person name="Israni S."/>
            <person name="Dalin E."/>
            <person name="Tice H."/>
            <person name="Pitluck S."/>
            <person name="Chain P."/>
            <person name="Malfatti S."/>
            <person name="Shin M."/>
            <person name="Vergez L."/>
            <person name="Schmutz J."/>
            <person name="Larimer F."/>
            <person name="Land M."/>
            <person name="Hauser L."/>
            <person name="Kyrpides N."/>
            <person name="Lykidis A."/>
            <person name="LiPuma J.J."/>
            <person name="Konstantinidis K."/>
            <person name="Tiedje J.M."/>
            <person name="Richardson P."/>
        </authorList>
    </citation>
    <scope>NUCLEOTIDE SEQUENCE [LARGE SCALE GENOMIC DNA]</scope>
    <source>
        <strain>AU 1054</strain>
    </source>
</reference>
<proteinExistence type="inferred from homology"/>
<keyword id="KW-0066">ATP synthesis</keyword>
<keyword id="KW-0997">Cell inner membrane</keyword>
<keyword id="KW-1003">Cell membrane</keyword>
<keyword id="KW-0138">CF(0)</keyword>
<keyword id="KW-0375">Hydrogen ion transport</keyword>
<keyword id="KW-0406">Ion transport</keyword>
<keyword id="KW-0472">Membrane</keyword>
<keyword id="KW-0812">Transmembrane</keyword>
<keyword id="KW-1133">Transmembrane helix</keyword>
<keyword id="KW-0813">Transport</keyword>
<sequence length="156" mass="17062">MNLNATLFAQMVVFLVLAWFTMKFVWPPLINALDERSKKIADGLAAAEKGKAELDAAHKRVDQELAQARNDGQQRIADAEKRAQAVAEEIKANAQAEAARIVAQAKAEAEQQIVKAREALRGEVAALAVKGAEQILKREVDQTAHAQLLNQLKAEL</sequence>
<dbReference type="EMBL" id="CP000378">
    <property type="protein sequence ID" value="ABF77849.1"/>
    <property type="molecule type" value="Genomic_DNA"/>
</dbReference>
<dbReference type="SMR" id="Q1BRA6"/>
<dbReference type="HOGENOM" id="CLU_079215_4_5_4"/>
<dbReference type="GO" id="GO:0005886">
    <property type="term" value="C:plasma membrane"/>
    <property type="evidence" value="ECO:0007669"/>
    <property type="project" value="UniProtKB-SubCell"/>
</dbReference>
<dbReference type="GO" id="GO:0045259">
    <property type="term" value="C:proton-transporting ATP synthase complex"/>
    <property type="evidence" value="ECO:0007669"/>
    <property type="project" value="UniProtKB-KW"/>
</dbReference>
<dbReference type="GO" id="GO:0046933">
    <property type="term" value="F:proton-transporting ATP synthase activity, rotational mechanism"/>
    <property type="evidence" value="ECO:0007669"/>
    <property type="project" value="UniProtKB-UniRule"/>
</dbReference>
<dbReference type="GO" id="GO:0046961">
    <property type="term" value="F:proton-transporting ATPase activity, rotational mechanism"/>
    <property type="evidence" value="ECO:0007669"/>
    <property type="project" value="TreeGrafter"/>
</dbReference>
<dbReference type="CDD" id="cd06503">
    <property type="entry name" value="ATP-synt_Fo_b"/>
    <property type="match status" value="1"/>
</dbReference>
<dbReference type="Gene3D" id="6.10.250.1580">
    <property type="match status" value="1"/>
</dbReference>
<dbReference type="HAMAP" id="MF_01398">
    <property type="entry name" value="ATP_synth_b_bprime"/>
    <property type="match status" value="1"/>
</dbReference>
<dbReference type="InterPro" id="IPR028987">
    <property type="entry name" value="ATP_synth_B-like_membr_sf"/>
</dbReference>
<dbReference type="InterPro" id="IPR002146">
    <property type="entry name" value="ATP_synth_b/b'su_bac/chlpt"/>
</dbReference>
<dbReference type="InterPro" id="IPR005864">
    <property type="entry name" value="ATP_synth_F0_bsu_bac"/>
</dbReference>
<dbReference type="InterPro" id="IPR050059">
    <property type="entry name" value="ATP_synthase_B_chain"/>
</dbReference>
<dbReference type="NCBIfam" id="TIGR01144">
    <property type="entry name" value="ATP_synt_b"/>
    <property type="match status" value="1"/>
</dbReference>
<dbReference type="NCBIfam" id="NF004411">
    <property type="entry name" value="PRK05759.1-2"/>
    <property type="match status" value="1"/>
</dbReference>
<dbReference type="PANTHER" id="PTHR33445:SF1">
    <property type="entry name" value="ATP SYNTHASE SUBUNIT B"/>
    <property type="match status" value="1"/>
</dbReference>
<dbReference type="PANTHER" id="PTHR33445">
    <property type="entry name" value="ATP SYNTHASE SUBUNIT B', CHLOROPLASTIC"/>
    <property type="match status" value="1"/>
</dbReference>
<dbReference type="Pfam" id="PF00430">
    <property type="entry name" value="ATP-synt_B"/>
    <property type="match status" value="1"/>
</dbReference>
<dbReference type="SUPFAM" id="SSF81573">
    <property type="entry name" value="F1F0 ATP synthase subunit B, membrane domain"/>
    <property type="match status" value="1"/>
</dbReference>
<accession>Q1BRA6</accession>
<comment type="function">
    <text evidence="1">F(1)F(0) ATP synthase produces ATP from ADP in the presence of a proton or sodium gradient. F-type ATPases consist of two structural domains, F(1) containing the extramembraneous catalytic core and F(0) containing the membrane proton channel, linked together by a central stalk and a peripheral stalk. During catalysis, ATP synthesis in the catalytic domain of F(1) is coupled via a rotary mechanism of the central stalk subunits to proton translocation.</text>
</comment>
<comment type="function">
    <text evidence="1">Component of the F(0) channel, it forms part of the peripheral stalk, linking F(1) to F(0).</text>
</comment>
<comment type="subunit">
    <text evidence="1">F-type ATPases have 2 components, F(1) - the catalytic core - and F(0) - the membrane proton channel. F(1) has five subunits: alpha(3), beta(3), gamma(1), delta(1), epsilon(1). F(0) has three main subunits: a(1), b(2) and c(10-14). The alpha and beta chains form an alternating ring which encloses part of the gamma chain. F(1) is attached to F(0) by a central stalk formed by the gamma and epsilon chains, while a peripheral stalk is formed by the delta and b chains.</text>
</comment>
<comment type="subcellular location">
    <subcellularLocation>
        <location evidence="1">Cell inner membrane</location>
        <topology evidence="1">Single-pass membrane protein</topology>
    </subcellularLocation>
</comment>
<comment type="similarity">
    <text evidence="1">Belongs to the ATPase B chain family.</text>
</comment>
<protein>
    <recommendedName>
        <fullName evidence="1">ATP synthase subunit b</fullName>
    </recommendedName>
    <alternativeName>
        <fullName evidence="1">ATP synthase F(0) sector subunit b</fullName>
    </alternativeName>
    <alternativeName>
        <fullName evidence="1">ATPase subunit I</fullName>
    </alternativeName>
    <alternativeName>
        <fullName evidence="1">F-type ATPase subunit b</fullName>
        <shortName evidence="1">F-ATPase subunit b</shortName>
    </alternativeName>
</protein>
<organism>
    <name type="scientific">Burkholderia orbicola (strain AU 1054)</name>
    <dbReference type="NCBI Taxonomy" id="331271"/>
    <lineage>
        <taxon>Bacteria</taxon>
        <taxon>Pseudomonadati</taxon>
        <taxon>Pseudomonadota</taxon>
        <taxon>Betaproteobacteria</taxon>
        <taxon>Burkholderiales</taxon>
        <taxon>Burkholderiaceae</taxon>
        <taxon>Burkholderia</taxon>
        <taxon>Burkholderia cepacia complex</taxon>
        <taxon>Burkholderia orbicola</taxon>
    </lineage>
</organism>
<evidence type="ECO:0000255" key="1">
    <source>
        <dbReference type="HAMAP-Rule" id="MF_01398"/>
    </source>
</evidence>